<keyword id="KW-0067">ATP-binding</keyword>
<keyword id="KW-0997">Cell inner membrane</keyword>
<keyword id="KW-1003">Cell membrane</keyword>
<keyword id="KW-0963">Cytoplasm</keyword>
<keyword id="KW-0472">Membrane</keyword>
<keyword id="KW-0479">Metal-binding</keyword>
<keyword id="KW-0547">Nucleotide-binding</keyword>
<keyword id="KW-0653">Protein transport</keyword>
<keyword id="KW-1185">Reference proteome</keyword>
<keyword id="KW-1278">Translocase</keyword>
<keyword id="KW-0811">Translocation</keyword>
<keyword id="KW-0813">Transport</keyword>
<keyword id="KW-0862">Zinc</keyword>
<evidence type="ECO:0000255" key="1">
    <source>
        <dbReference type="HAMAP-Rule" id="MF_01382"/>
    </source>
</evidence>
<dbReference type="EC" id="7.4.2.8" evidence="1"/>
<dbReference type="EMBL" id="CP000270">
    <property type="protein sequence ID" value="ABE32438.1"/>
    <property type="molecule type" value="Genomic_DNA"/>
</dbReference>
<dbReference type="RefSeq" id="WP_011489910.1">
    <property type="nucleotide sequence ID" value="NC_007951.1"/>
</dbReference>
<dbReference type="SMR" id="Q13U01"/>
<dbReference type="STRING" id="266265.Bxe_A0495"/>
<dbReference type="KEGG" id="bxb:DR64_2671"/>
<dbReference type="KEGG" id="bxe:Bxe_A0495"/>
<dbReference type="PATRIC" id="fig|266265.5.peg.4121"/>
<dbReference type="eggNOG" id="COG0653">
    <property type="taxonomic scope" value="Bacteria"/>
</dbReference>
<dbReference type="OrthoDB" id="9805579at2"/>
<dbReference type="Proteomes" id="UP000001817">
    <property type="component" value="Chromosome 1"/>
</dbReference>
<dbReference type="GO" id="GO:0031522">
    <property type="term" value="C:cell envelope Sec protein transport complex"/>
    <property type="evidence" value="ECO:0007669"/>
    <property type="project" value="TreeGrafter"/>
</dbReference>
<dbReference type="GO" id="GO:0005829">
    <property type="term" value="C:cytosol"/>
    <property type="evidence" value="ECO:0007669"/>
    <property type="project" value="TreeGrafter"/>
</dbReference>
<dbReference type="GO" id="GO:0005886">
    <property type="term" value="C:plasma membrane"/>
    <property type="evidence" value="ECO:0007669"/>
    <property type="project" value="UniProtKB-SubCell"/>
</dbReference>
<dbReference type="GO" id="GO:0005524">
    <property type="term" value="F:ATP binding"/>
    <property type="evidence" value="ECO:0007669"/>
    <property type="project" value="UniProtKB-UniRule"/>
</dbReference>
<dbReference type="GO" id="GO:0046872">
    <property type="term" value="F:metal ion binding"/>
    <property type="evidence" value="ECO:0007669"/>
    <property type="project" value="UniProtKB-KW"/>
</dbReference>
<dbReference type="GO" id="GO:0008564">
    <property type="term" value="F:protein-exporting ATPase activity"/>
    <property type="evidence" value="ECO:0007669"/>
    <property type="project" value="UniProtKB-EC"/>
</dbReference>
<dbReference type="GO" id="GO:0065002">
    <property type="term" value="P:intracellular protein transmembrane transport"/>
    <property type="evidence" value="ECO:0007669"/>
    <property type="project" value="UniProtKB-UniRule"/>
</dbReference>
<dbReference type="GO" id="GO:0017038">
    <property type="term" value="P:protein import"/>
    <property type="evidence" value="ECO:0007669"/>
    <property type="project" value="InterPro"/>
</dbReference>
<dbReference type="GO" id="GO:0006605">
    <property type="term" value="P:protein targeting"/>
    <property type="evidence" value="ECO:0007669"/>
    <property type="project" value="UniProtKB-UniRule"/>
</dbReference>
<dbReference type="GO" id="GO:0043952">
    <property type="term" value="P:protein transport by the Sec complex"/>
    <property type="evidence" value="ECO:0007669"/>
    <property type="project" value="TreeGrafter"/>
</dbReference>
<dbReference type="CDD" id="cd17928">
    <property type="entry name" value="DEXDc_SecA"/>
    <property type="match status" value="1"/>
</dbReference>
<dbReference type="CDD" id="cd18803">
    <property type="entry name" value="SF2_C_secA"/>
    <property type="match status" value="1"/>
</dbReference>
<dbReference type="FunFam" id="3.40.50.300:FF:000081">
    <property type="entry name" value="Preprotein translocase subunit SecA"/>
    <property type="match status" value="1"/>
</dbReference>
<dbReference type="FunFam" id="3.40.50.300:FF:000113">
    <property type="entry name" value="Preprotein translocase subunit SecA"/>
    <property type="match status" value="1"/>
</dbReference>
<dbReference type="FunFam" id="3.90.1440.10:FF:000001">
    <property type="entry name" value="Preprotein translocase subunit SecA"/>
    <property type="match status" value="1"/>
</dbReference>
<dbReference type="FunFam" id="1.10.3060.10:FF:000003">
    <property type="entry name" value="Protein translocase subunit SecA"/>
    <property type="match status" value="1"/>
</dbReference>
<dbReference type="Gene3D" id="1.10.3060.10">
    <property type="entry name" value="Helical scaffold and wing domains of SecA"/>
    <property type="match status" value="1"/>
</dbReference>
<dbReference type="Gene3D" id="3.40.50.300">
    <property type="entry name" value="P-loop containing nucleotide triphosphate hydrolases"/>
    <property type="match status" value="2"/>
</dbReference>
<dbReference type="Gene3D" id="3.90.1440.10">
    <property type="entry name" value="SecA, preprotein cross-linking domain"/>
    <property type="match status" value="1"/>
</dbReference>
<dbReference type="HAMAP" id="MF_01382">
    <property type="entry name" value="SecA"/>
    <property type="match status" value="1"/>
</dbReference>
<dbReference type="InterPro" id="IPR014001">
    <property type="entry name" value="Helicase_ATP-bd"/>
</dbReference>
<dbReference type="InterPro" id="IPR001650">
    <property type="entry name" value="Helicase_C-like"/>
</dbReference>
<dbReference type="InterPro" id="IPR027417">
    <property type="entry name" value="P-loop_NTPase"/>
</dbReference>
<dbReference type="InterPro" id="IPR004027">
    <property type="entry name" value="SEC_C_motif"/>
</dbReference>
<dbReference type="InterPro" id="IPR000185">
    <property type="entry name" value="SecA"/>
</dbReference>
<dbReference type="InterPro" id="IPR020937">
    <property type="entry name" value="SecA_CS"/>
</dbReference>
<dbReference type="InterPro" id="IPR011115">
    <property type="entry name" value="SecA_DEAD"/>
</dbReference>
<dbReference type="InterPro" id="IPR014018">
    <property type="entry name" value="SecA_motor_DEAD"/>
</dbReference>
<dbReference type="InterPro" id="IPR011130">
    <property type="entry name" value="SecA_preprotein_X-link_dom"/>
</dbReference>
<dbReference type="InterPro" id="IPR044722">
    <property type="entry name" value="SecA_SF2_C"/>
</dbReference>
<dbReference type="InterPro" id="IPR011116">
    <property type="entry name" value="SecA_Wing/Scaffold"/>
</dbReference>
<dbReference type="InterPro" id="IPR036266">
    <property type="entry name" value="SecA_Wing/Scaffold_sf"/>
</dbReference>
<dbReference type="InterPro" id="IPR036670">
    <property type="entry name" value="SecA_X-link_sf"/>
</dbReference>
<dbReference type="NCBIfam" id="NF009538">
    <property type="entry name" value="PRK12904.1"/>
    <property type="match status" value="1"/>
</dbReference>
<dbReference type="NCBIfam" id="TIGR00963">
    <property type="entry name" value="secA"/>
    <property type="match status" value="1"/>
</dbReference>
<dbReference type="PANTHER" id="PTHR30612:SF0">
    <property type="entry name" value="CHLOROPLAST PROTEIN-TRANSPORTING ATPASE"/>
    <property type="match status" value="1"/>
</dbReference>
<dbReference type="PANTHER" id="PTHR30612">
    <property type="entry name" value="SECA INNER MEMBRANE COMPONENT OF SEC PROTEIN SECRETION SYSTEM"/>
    <property type="match status" value="1"/>
</dbReference>
<dbReference type="Pfam" id="PF21090">
    <property type="entry name" value="P-loop_SecA"/>
    <property type="match status" value="1"/>
</dbReference>
<dbReference type="Pfam" id="PF02810">
    <property type="entry name" value="SEC-C"/>
    <property type="match status" value="1"/>
</dbReference>
<dbReference type="Pfam" id="PF07517">
    <property type="entry name" value="SecA_DEAD"/>
    <property type="match status" value="1"/>
</dbReference>
<dbReference type="Pfam" id="PF01043">
    <property type="entry name" value="SecA_PP_bind"/>
    <property type="match status" value="1"/>
</dbReference>
<dbReference type="Pfam" id="PF07516">
    <property type="entry name" value="SecA_SW"/>
    <property type="match status" value="1"/>
</dbReference>
<dbReference type="PRINTS" id="PR00906">
    <property type="entry name" value="SECA"/>
</dbReference>
<dbReference type="SMART" id="SM00957">
    <property type="entry name" value="SecA_DEAD"/>
    <property type="match status" value="1"/>
</dbReference>
<dbReference type="SMART" id="SM00958">
    <property type="entry name" value="SecA_PP_bind"/>
    <property type="match status" value="1"/>
</dbReference>
<dbReference type="SUPFAM" id="SSF81886">
    <property type="entry name" value="Helical scaffold and wing domains of SecA"/>
    <property type="match status" value="1"/>
</dbReference>
<dbReference type="SUPFAM" id="SSF52540">
    <property type="entry name" value="P-loop containing nucleoside triphosphate hydrolases"/>
    <property type="match status" value="2"/>
</dbReference>
<dbReference type="SUPFAM" id="SSF81767">
    <property type="entry name" value="Pre-protein crosslinking domain of SecA"/>
    <property type="match status" value="1"/>
</dbReference>
<dbReference type="PROSITE" id="PS01312">
    <property type="entry name" value="SECA"/>
    <property type="match status" value="1"/>
</dbReference>
<dbReference type="PROSITE" id="PS51196">
    <property type="entry name" value="SECA_MOTOR_DEAD"/>
    <property type="match status" value="1"/>
</dbReference>
<name>SECA_PARXL</name>
<feature type="chain" id="PRO_0000320759" description="Protein translocase subunit SecA">
    <location>
        <begin position="1"/>
        <end position="936"/>
    </location>
</feature>
<feature type="binding site" evidence="1">
    <location>
        <position position="87"/>
    </location>
    <ligand>
        <name>ATP</name>
        <dbReference type="ChEBI" id="CHEBI:30616"/>
    </ligand>
</feature>
<feature type="binding site" evidence="1">
    <location>
        <begin position="105"/>
        <end position="109"/>
    </location>
    <ligand>
        <name>ATP</name>
        <dbReference type="ChEBI" id="CHEBI:30616"/>
    </ligand>
</feature>
<feature type="binding site" evidence="1">
    <location>
        <position position="515"/>
    </location>
    <ligand>
        <name>ATP</name>
        <dbReference type="ChEBI" id="CHEBI:30616"/>
    </ligand>
</feature>
<feature type="binding site" evidence="1">
    <location>
        <position position="920"/>
    </location>
    <ligand>
        <name>Zn(2+)</name>
        <dbReference type="ChEBI" id="CHEBI:29105"/>
    </ligand>
</feature>
<feature type="binding site" evidence="1">
    <location>
        <position position="922"/>
    </location>
    <ligand>
        <name>Zn(2+)</name>
        <dbReference type="ChEBI" id="CHEBI:29105"/>
    </ligand>
</feature>
<feature type="binding site" evidence="1">
    <location>
        <position position="931"/>
    </location>
    <ligand>
        <name>Zn(2+)</name>
        <dbReference type="ChEBI" id="CHEBI:29105"/>
    </ligand>
</feature>
<feature type="binding site" evidence="1">
    <location>
        <position position="932"/>
    </location>
    <ligand>
        <name>Zn(2+)</name>
        <dbReference type="ChEBI" id="CHEBI:29105"/>
    </ligand>
</feature>
<proteinExistence type="inferred from homology"/>
<sequence>MTTGFLQKIFGSRNQRLVKQYQKTVAAINALEPQIEQLTDDQLRGKTGEFRQRVASGESLDKLLPEAFAVCREASKRVLKMRHFDVQLIGGMVLHYGKIGEMRTGEGKTLVATLPVYLNALSGRGVHVVTVNDYLAQRDAEWMARLYNFLGLSVGINLSQMDHAAKQEAYAADITYGTNNEFGFDYLRDNMVYETDARVQRALNFAVVDEVDSILIDEARTPLIISGQAEDHTELYVRMNALPPLLERQIGEEKADGTGVEKPGDYTLDEKGRQVFLTESGHEKAERLLSEWGLIGEGESLYAPQNITLMHHVYAALRAHTLFFKDQHYVVQNGEVVIVDEFTGRLMSGRRWSDGLHQAVEAKEHVKIQSENQTLASITFQNYFRMYAKLSGMTGTADTEAYEFNEIYGLETVVIPTNRPPKRIDKQDQIYKTAKERYDAVIRDIRDCYERGQPVLVGTTSIENSELLSHLLKQAGLPHEVLNAKQHAREAEIVAEAGRPKRITIATNMAGRGTDIVLGGNAEKQASFLELDETLPEDEKRRRIQKLHDEWQALHDQVKAAGGLHIIGTERHESRRIDNQLRGRAGRQGDPGSSRFYLSLEDPLLRIFAGDRVRAIMERLKMPEGEAIEAGIVSRSIESAQRKVEARNFDIRKQLLEYDDVSNDQRKVIYQQRNELLEANDITETIGAMRQSVIADIVHQFVPAGSIEEQWDVPELEEVLRNEWQLDLAIQEMINESNSISADEILEAVEAAADEAYEAKVELVGRESFSAFERSIMLQTLDRSWREHLAALDHLRQGIHLRGYAQKNPKQEYKREAFELFAAMLDAVKLEVTRVVMNVQIQSPEQLEQAAEQLEEQGSHLENVEFRHAEFAEAAAAAPVAAEAATAAMIGDAMSHGSSQAAAANMSADNVPKVGRNDPCPCGSGKKYKQCHGKIV</sequence>
<protein>
    <recommendedName>
        <fullName evidence="1">Protein translocase subunit SecA</fullName>
        <ecNumber evidence="1">7.4.2.8</ecNumber>
    </recommendedName>
</protein>
<organism>
    <name type="scientific">Paraburkholderia xenovorans (strain LB400)</name>
    <dbReference type="NCBI Taxonomy" id="266265"/>
    <lineage>
        <taxon>Bacteria</taxon>
        <taxon>Pseudomonadati</taxon>
        <taxon>Pseudomonadota</taxon>
        <taxon>Betaproteobacteria</taxon>
        <taxon>Burkholderiales</taxon>
        <taxon>Burkholderiaceae</taxon>
        <taxon>Paraburkholderia</taxon>
    </lineage>
</organism>
<reference key="1">
    <citation type="journal article" date="2006" name="Proc. Natl. Acad. Sci. U.S.A.">
        <title>Burkholderia xenovorans LB400 harbors a multi-replicon, 9.73-Mbp genome shaped for versatility.</title>
        <authorList>
            <person name="Chain P.S.G."/>
            <person name="Denef V.J."/>
            <person name="Konstantinidis K.T."/>
            <person name="Vergez L.M."/>
            <person name="Agullo L."/>
            <person name="Reyes V.L."/>
            <person name="Hauser L."/>
            <person name="Cordova M."/>
            <person name="Gomez L."/>
            <person name="Gonzalez M."/>
            <person name="Land M."/>
            <person name="Lao V."/>
            <person name="Larimer F."/>
            <person name="LiPuma J.J."/>
            <person name="Mahenthiralingam E."/>
            <person name="Malfatti S.A."/>
            <person name="Marx C.J."/>
            <person name="Parnell J.J."/>
            <person name="Ramette A."/>
            <person name="Richardson P."/>
            <person name="Seeger M."/>
            <person name="Smith D."/>
            <person name="Spilker T."/>
            <person name="Sul W.J."/>
            <person name="Tsoi T.V."/>
            <person name="Ulrich L.E."/>
            <person name="Zhulin I.B."/>
            <person name="Tiedje J.M."/>
        </authorList>
    </citation>
    <scope>NUCLEOTIDE SEQUENCE [LARGE SCALE GENOMIC DNA]</scope>
    <source>
        <strain>LB400</strain>
    </source>
</reference>
<gene>
    <name evidence="1" type="primary">secA</name>
    <name type="ordered locus">Bxeno_A3900</name>
    <name type="ORF">Bxe_A0495</name>
</gene>
<comment type="function">
    <text evidence="1">Part of the Sec protein translocase complex. Interacts with the SecYEG preprotein conducting channel. Has a central role in coupling the hydrolysis of ATP to the transfer of proteins into and across the cell membrane, serving both as a receptor for the preprotein-SecB complex and as an ATP-driven molecular motor driving the stepwise translocation of polypeptide chains across the membrane.</text>
</comment>
<comment type="catalytic activity">
    <reaction evidence="1">
        <text>ATP + H2O + cellular proteinSide 1 = ADP + phosphate + cellular proteinSide 2.</text>
        <dbReference type="EC" id="7.4.2.8"/>
    </reaction>
</comment>
<comment type="cofactor">
    <cofactor evidence="1">
        <name>Zn(2+)</name>
        <dbReference type="ChEBI" id="CHEBI:29105"/>
    </cofactor>
    <text evidence="1">May bind 1 zinc ion per subunit.</text>
</comment>
<comment type="subunit">
    <text evidence="1">Monomer and homodimer. Part of the essential Sec protein translocation apparatus which comprises SecA, SecYEG and auxiliary proteins SecDF-YajC and YidC.</text>
</comment>
<comment type="subcellular location">
    <subcellularLocation>
        <location evidence="1">Cell inner membrane</location>
        <topology evidence="1">Peripheral membrane protein</topology>
        <orientation evidence="1">Cytoplasmic side</orientation>
    </subcellularLocation>
    <subcellularLocation>
        <location evidence="1">Cytoplasm</location>
    </subcellularLocation>
    <text evidence="1">Distribution is 50-50.</text>
</comment>
<comment type="similarity">
    <text evidence="1">Belongs to the SecA family.</text>
</comment>
<accession>Q13U01</accession>